<name>OBG_ALCBS</name>
<comment type="function">
    <text evidence="1">An essential GTPase which binds GTP, GDP and possibly (p)ppGpp with moderate affinity, with high nucleotide exchange rates and a fairly low GTP hydrolysis rate. Plays a role in control of the cell cycle, stress response, ribosome biogenesis and in those bacteria that undergo differentiation, in morphogenesis control.</text>
</comment>
<comment type="cofactor">
    <cofactor evidence="1">
        <name>Mg(2+)</name>
        <dbReference type="ChEBI" id="CHEBI:18420"/>
    </cofactor>
</comment>
<comment type="subunit">
    <text evidence="1">Monomer.</text>
</comment>
<comment type="subcellular location">
    <subcellularLocation>
        <location evidence="1">Cytoplasm</location>
    </subcellularLocation>
</comment>
<comment type="similarity">
    <text evidence="1">Belongs to the TRAFAC class OBG-HflX-like GTPase superfamily. OBG GTPase family.</text>
</comment>
<organism>
    <name type="scientific">Alcanivorax borkumensis (strain ATCC 700651 / DSM 11573 / NCIMB 13689 / SK2)</name>
    <dbReference type="NCBI Taxonomy" id="393595"/>
    <lineage>
        <taxon>Bacteria</taxon>
        <taxon>Pseudomonadati</taxon>
        <taxon>Pseudomonadota</taxon>
        <taxon>Gammaproteobacteria</taxon>
        <taxon>Oceanospirillales</taxon>
        <taxon>Alcanivoracaceae</taxon>
        <taxon>Alcanivorax</taxon>
    </lineage>
</organism>
<dbReference type="EC" id="3.6.5.-" evidence="1"/>
<dbReference type="EMBL" id="AM286690">
    <property type="protein sequence ID" value="CAL15902.1"/>
    <property type="molecule type" value="Genomic_DNA"/>
</dbReference>
<dbReference type="SMR" id="Q0VSE6"/>
<dbReference type="STRING" id="393595.ABO_0454"/>
<dbReference type="KEGG" id="abo:ABO_0454"/>
<dbReference type="eggNOG" id="COG0536">
    <property type="taxonomic scope" value="Bacteria"/>
</dbReference>
<dbReference type="HOGENOM" id="CLU_011747_2_0_6"/>
<dbReference type="OrthoDB" id="9807318at2"/>
<dbReference type="Proteomes" id="UP000008871">
    <property type="component" value="Chromosome"/>
</dbReference>
<dbReference type="GO" id="GO:0005737">
    <property type="term" value="C:cytoplasm"/>
    <property type="evidence" value="ECO:0007669"/>
    <property type="project" value="UniProtKB-SubCell"/>
</dbReference>
<dbReference type="GO" id="GO:0005525">
    <property type="term" value="F:GTP binding"/>
    <property type="evidence" value="ECO:0007669"/>
    <property type="project" value="UniProtKB-UniRule"/>
</dbReference>
<dbReference type="GO" id="GO:0003924">
    <property type="term" value="F:GTPase activity"/>
    <property type="evidence" value="ECO:0007669"/>
    <property type="project" value="UniProtKB-UniRule"/>
</dbReference>
<dbReference type="GO" id="GO:0000287">
    <property type="term" value="F:magnesium ion binding"/>
    <property type="evidence" value="ECO:0007669"/>
    <property type="project" value="InterPro"/>
</dbReference>
<dbReference type="GO" id="GO:0042254">
    <property type="term" value="P:ribosome biogenesis"/>
    <property type="evidence" value="ECO:0007669"/>
    <property type="project" value="UniProtKB-UniRule"/>
</dbReference>
<dbReference type="CDD" id="cd01898">
    <property type="entry name" value="Obg"/>
    <property type="match status" value="1"/>
</dbReference>
<dbReference type="FunFam" id="2.70.210.12:FF:000001">
    <property type="entry name" value="GTPase Obg"/>
    <property type="match status" value="1"/>
</dbReference>
<dbReference type="Gene3D" id="2.70.210.12">
    <property type="entry name" value="GTP1/OBG domain"/>
    <property type="match status" value="1"/>
</dbReference>
<dbReference type="Gene3D" id="3.40.50.300">
    <property type="entry name" value="P-loop containing nucleotide triphosphate hydrolases"/>
    <property type="match status" value="1"/>
</dbReference>
<dbReference type="HAMAP" id="MF_01454">
    <property type="entry name" value="GTPase_Obg"/>
    <property type="match status" value="1"/>
</dbReference>
<dbReference type="InterPro" id="IPR031167">
    <property type="entry name" value="G_OBG"/>
</dbReference>
<dbReference type="InterPro" id="IPR006073">
    <property type="entry name" value="GTP-bd"/>
</dbReference>
<dbReference type="InterPro" id="IPR014100">
    <property type="entry name" value="GTP-bd_Obg/CgtA"/>
</dbReference>
<dbReference type="InterPro" id="IPR006074">
    <property type="entry name" value="GTP1-OBG_CS"/>
</dbReference>
<dbReference type="InterPro" id="IPR006169">
    <property type="entry name" value="GTP1_OBG_dom"/>
</dbReference>
<dbReference type="InterPro" id="IPR036726">
    <property type="entry name" value="GTP1_OBG_dom_sf"/>
</dbReference>
<dbReference type="InterPro" id="IPR045086">
    <property type="entry name" value="OBG_GTPase"/>
</dbReference>
<dbReference type="InterPro" id="IPR027417">
    <property type="entry name" value="P-loop_NTPase"/>
</dbReference>
<dbReference type="NCBIfam" id="TIGR02729">
    <property type="entry name" value="Obg_CgtA"/>
    <property type="match status" value="1"/>
</dbReference>
<dbReference type="NCBIfam" id="NF008955">
    <property type="entry name" value="PRK12297.1"/>
    <property type="match status" value="1"/>
</dbReference>
<dbReference type="NCBIfam" id="NF008956">
    <property type="entry name" value="PRK12299.1"/>
    <property type="match status" value="1"/>
</dbReference>
<dbReference type="PANTHER" id="PTHR11702">
    <property type="entry name" value="DEVELOPMENTALLY REGULATED GTP-BINDING PROTEIN-RELATED"/>
    <property type="match status" value="1"/>
</dbReference>
<dbReference type="PANTHER" id="PTHR11702:SF31">
    <property type="entry name" value="MITOCHONDRIAL RIBOSOME-ASSOCIATED GTPASE 2"/>
    <property type="match status" value="1"/>
</dbReference>
<dbReference type="Pfam" id="PF01018">
    <property type="entry name" value="GTP1_OBG"/>
    <property type="match status" value="1"/>
</dbReference>
<dbReference type="Pfam" id="PF01926">
    <property type="entry name" value="MMR_HSR1"/>
    <property type="match status" value="1"/>
</dbReference>
<dbReference type="PIRSF" id="PIRSF002401">
    <property type="entry name" value="GTP_bd_Obg/CgtA"/>
    <property type="match status" value="1"/>
</dbReference>
<dbReference type="PRINTS" id="PR00326">
    <property type="entry name" value="GTP1OBG"/>
</dbReference>
<dbReference type="SUPFAM" id="SSF82051">
    <property type="entry name" value="Obg GTP-binding protein N-terminal domain"/>
    <property type="match status" value="1"/>
</dbReference>
<dbReference type="SUPFAM" id="SSF52540">
    <property type="entry name" value="P-loop containing nucleoside triphosphate hydrolases"/>
    <property type="match status" value="1"/>
</dbReference>
<dbReference type="PROSITE" id="PS51710">
    <property type="entry name" value="G_OBG"/>
    <property type="match status" value="1"/>
</dbReference>
<dbReference type="PROSITE" id="PS00905">
    <property type="entry name" value="GTP1_OBG"/>
    <property type="match status" value="1"/>
</dbReference>
<dbReference type="PROSITE" id="PS51883">
    <property type="entry name" value="OBG"/>
    <property type="match status" value="1"/>
</dbReference>
<proteinExistence type="inferred from homology"/>
<protein>
    <recommendedName>
        <fullName evidence="1">GTPase Obg</fullName>
        <ecNumber evidence="1">3.6.5.-</ecNumber>
    </recommendedName>
    <alternativeName>
        <fullName evidence="1">GTP-binding protein Obg</fullName>
    </alternativeName>
</protein>
<keyword id="KW-0963">Cytoplasm</keyword>
<keyword id="KW-0342">GTP-binding</keyword>
<keyword id="KW-0378">Hydrolase</keyword>
<keyword id="KW-0460">Magnesium</keyword>
<keyword id="KW-0479">Metal-binding</keyword>
<keyword id="KW-0547">Nucleotide-binding</keyword>
<keyword id="KW-1185">Reference proteome</keyword>
<evidence type="ECO:0000255" key="1">
    <source>
        <dbReference type="HAMAP-Rule" id="MF_01454"/>
    </source>
</evidence>
<evidence type="ECO:0000255" key="2">
    <source>
        <dbReference type="PROSITE-ProRule" id="PRU01231"/>
    </source>
</evidence>
<evidence type="ECO:0000256" key="3">
    <source>
        <dbReference type="SAM" id="MobiDB-lite"/>
    </source>
</evidence>
<feature type="chain" id="PRO_0000385682" description="GTPase Obg">
    <location>
        <begin position="1"/>
        <end position="391"/>
    </location>
</feature>
<feature type="domain" description="Obg" evidence="2">
    <location>
        <begin position="1"/>
        <end position="159"/>
    </location>
</feature>
<feature type="domain" description="OBG-type G" evidence="1">
    <location>
        <begin position="160"/>
        <end position="333"/>
    </location>
</feature>
<feature type="region of interest" description="Disordered" evidence="3">
    <location>
        <begin position="367"/>
        <end position="391"/>
    </location>
</feature>
<feature type="compositionally biased region" description="Basic and acidic residues" evidence="3">
    <location>
        <begin position="367"/>
        <end position="377"/>
    </location>
</feature>
<feature type="compositionally biased region" description="Acidic residues" evidence="3">
    <location>
        <begin position="378"/>
        <end position="391"/>
    </location>
</feature>
<feature type="binding site" evidence="1">
    <location>
        <begin position="166"/>
        <end position="173"/>
    </location>
    <ligand>
        <name>GTP</name>
        <dbReference type="ChEBI" id="CHEBI:37565"/>
    </ligand>
</feature>
<feature type="binding site" evidence="1">
    <location>
        <position position="173"/>
    </location>
    <ligand>
        <name>Mg(2+)</name>
        <dbReference type="ChEBI" id="CHEBI:18420"/>
    </ligand>
</feature>
<feature type="binding site" evidence="1">
    <location>
        <begin position="191"/>
        <end position="195"/>
    </location>
    <ligand>
        <name>GTP</name>
        <dbReference type="ChEBI" id="CHEBI:37565"/>
    </ligand>
</feature>
<feature type="binding site" evidence="1">
    <location>
        <position position="193"/>
    </location>
    <ligand>
        <name>Mg(2+)</name>
        <dbReference type="ChEBI" id="CHEBI:18420"/>
    </ligand>
</feature>
<feature type="binding site" evidence="1">
    <location>
        <begin position="213"/>
        <end position="216"/>
    </location>
    <ligand>
        <name>GTP</name>
        <dbReference type="ChEBI" id="CHEBI:37565"/>
    </ligand>
</feature>
<feature type="binding site" evidence="1">
    <location>
        <begin position="283"/>
        <end position="286"/>
    </location>
    <ligand>
        <name>GTP</name>
        <dbReference type="ChEBI" id="CHEBI:37565"/>
    </ligand>
</feature>
<feature type="binding site" evidence="1">
    <location>
        <begin position="314"/>
        <end position="316"/>
    </location>
    <ligand>
        <name>GTP</name>
        <dbReference type="ChEBI" id="CHEBI:37565"/>
    </ligand>
</feature>
<gene>
    <name evidence="1" type="primary">obg</name>
    <name type="ordered locus">ABO_0454</name>
</gene>
<accession>Q0VSE6</accession>
<sequence>MQFVDEATIDVHAGKGGDGCLSFRREKYVEFGGPDGGDGGAGGHVFVQADTNINTLVDYRYDRIFKARNGEPGKGRQMTGKSAEDIILYVPVGTTVVDLDTDEVLADLTDTDKPVMVAQAGRGGLGNIHFKSSVNQAPRKTTKGKPGESRRLRLELKVLADVGLLGMPNAGKSTLIRAISAAKPKVADYPFTTLIPNLGVVKADRYRSFVVADIPGLIEGAAEGAGLGIRFLKHLARTRLLLHVVDLAPMDGSSPANHIDAIADELDRFSPALAEQERWLVFNKIDLLADDEAQAQVDAIVDELGWQGPVFKVSAAAGVGCEDLVYALMNAIEDRRLLEREDPAYAAAQQDLRARLEEEARERVQELKAEARQARQNDDDDDHDVEVVYEP</sequence>
<reference key="1">
    <citation type="journal article" date="2006" name="Nat. Biotechnol.">
        <title>Genome sequence of the ubiquitous hydrocarbon-degrading marine bacterium Alcanivorax borkumensis.</title>
        <authorList>
            <person name="Schneiker S."/>
            <person name="Martins dos Santos V.A.P."/>
            <person name="Bartels D."/>
            <person name="Bekel T."/>
            <person name="Brecht M."/>
            <person name="Buhrmester J."/>
            <person name="Chernikova T.N."/>
            <person name="Denaro R."/>
            <person name="Ferrer M."/>
            <person name="Gertler C."/>
            <person name="Goesmann A."/>
            <person name="Golyshina O.V."/>
            <person name="Kaminski F."/>
            <person name="Khachane A.N."/>
            <person name="Lang S."/>
            <person name="Linke B."/>
            <person name="McHardy A.C."/>
            <person name="Meyer F."/>
            <person name="Nechitaylo T."/>
            <person name="Puehler A."/>
            <person name="Regenhardt D."/>
            <person name="Rupp O."/>
            <person name="Sabirova J.S."/>
            <person name="Selbitschka W."/>
            <person name="Yakimov M.M."/>
            <person name="Timmis K.N."/>
            <person name="Vorhoelter F.-J."/>
            <person name="Weidner S."/>
            <person name="Kaiser O."/>
            <person name="Golyshin P.N."/>
        </authorList>
    </citation>
    <scope>NUCLEOTIDE SEQUENCE [LARGE SCALE GENOMIC DNA]</scope>
    <source>
        <strain>ATCC 700651 / DSM 11573 / NCIMB 13689 / SK2</strain>
    </source>
</reference>